<comment type="function">
    <text evidence="1">Catalyzes the interconversion of L-alanine and D-alanine. May also act on other amino acids.</text>
</comment>
<comment type="catalytic activity">
    <reaction evidence="1">
        <text>L-alanine = D-alanine</text>
        <dbReference type="Rhea" id="RHEA:20249"/>
        <dbReference type="ChEBI" id="CHEBI:57416"/>
        <dbReference type="ChEBI" id="CHEBI:57972"/>
        <dbReference type="EC" id="5.1.1.1"/>
    </reaction>
</comment>
<comment type="cofactor">
    <cofactor evidence="1">
        <name>pyridoxal 5'-phosphate</name>
        <dbReference type="ChEBI" id="CHEBI:597326"/>
    </cofactor>
</comment>
<comment type="pathway">
    <text evidence="1">Amino-acid biosynthesis; D-alanine biosynthesis; D-alanine from L-alanine: step 1/1.</text>
</comment>
<comment type="similarity">
    <text evidence="1">Belongs to the alanine racemase family.</text>
</comment>
<keyword id="KW-0413">Isomerase</keyword>
<keyword id="KW-0663">Pyridoxal phosphate</keyword>
<keyword id="KW-1185">Reference proteome</keyword>
<gene>
    <name type="primary">alr</name>
    <name type="ordered locus">STH2936</name>
</gene>
<sequence length="377" mass="40523">MDLDGMRPTWAEVDLNAVRANIRALKRISKAPRLMAVVKANGYGHGAVPVATAAIEAGADWLGVASVEEGVTLRRHGISAPILVLGYVSPGQAEAVLTEGLRVALFDGELGQALNREGRRLGRWARVHLKVDTGMGRIGLQPAEVGRLGRELARLDHVEVEGVFTHLATADEPGNPYTRLQLERYEAALAELAAAGVRPAIRHAANSAGLMLHPEAHYDMVRSGIAVVGLPPAPGVAWPVKLAPALTWKTRVGLVKWLEAGHSISYGCTYTTARREQIATLPVGYADGYPRRLSNRAQVLIRGRRCPVVGVVTMDQMMVRVPDDLPVRVGDEVVLIGRQGGEEITATELAGLADTISYEIVCGISRRVPRFYGGETA</sequence>
<accession>Q67K79</accession>
<proteinExistence type="inferred from homology"/>
<feature type="chain" id="PRO_1000066057" description="Alanine racemase">
    <location>
        <begin position="1"/>
        <end position="377"/>
    </location>
</feature>
<feature type="active site" description="Proton acceptor; specific for D-alanine" evidence="1">
    <location>
        <position position="39"/>
    </location>
</feature>
<feature type="active site" description="Proton acceptor; specific for L-alanine" evidence="1">
    <location>
        <position position="266"/>
    </location>
</feature>
<feature type="binding site" evidence="1">
    <location>
        <position position="137"/>
    </location>
    <ligand>
        <name>substrate</name>
    </ligand>
</feature>
<feature type="binding site" evidence="1">
    <location>
        <position position="314"/>
    </location>
    <ligand>
        <name>substrate</name>
    </ligand>
</feature>
<feature type="modified residue" description="N6-(pyridoxal phosphate)lysine" evidence="1">
    <location>
        <position position="39"/>
    </location>
</feature>
<protein>
    <recommendedName>
        <fullName evidence="1">Alanine racemase</fullName>
        <ecNumber evidence="1">5.1.1.1</ecNumber>
    </recommendedName>
</protein>
<reference key="1">
    <citation type="journal article" date="2004" name="Nucleic Acids Res.">
        <title>Genome sequence of Symbiobacterium thermophilum, an uncultivable bacterium that depends on microbial commensalism.</title>
        <authorList>
            <person name="Ueda K."/>
            <person name="Yamashita A."/>
            <person name="Ishikawa J."/>
            <person name="Shimada M."/>
            <person name="Watsuji T."/>
            <person name="Morimura K."/>
            <person name="Ikeda H."/>
            <person name="Hattori M."/>
            <person name="Beppu T."/>
        </authorList>
    </citation>
    <scope>NUCLEOTIDE SEQUENCE [LARGE SCALE GENOMIC DNA]</scope>
    <source>
        <strain>DSM 24528 / JCM 14929 / IAM 14863 / T</strain>
    </source>
</reference>
<dbReference type="EC" id="5.1.1.1" evidence="1"/>
<dbReference type="EMBL" id="AP006840">
    <property type="protein sequence ID" value="BAD41919.1"/>
    <property type="molecule type" value="Genomic_DNA"/>
</dbReference>
<dbReference type="RefSeq" id="WP_011197052.1">
    <property type="nucleotide sequence ID" value="NC_006177.1"/>
</dbReference>
<dbReference type="SMR" id="Q67K79"/>
<dbReference type="STRING" id="292459.STH2936"/>
<dbReference type="KEGG" id="sth:STH2936"/>
<dbReference type="eggNOG" id="COG0787">
    <property type="taxonomic scope" value="Bacteria"/>
</dbReference>
<dbReference type="HOGENOM" id="CLU_028393_2_2_9"/>
<dbReference type="OrthoDB" id="9813814at2"/>
<dbReference type="UniPathway" id="UPA00042">
    <property type="reaction ID" value="UER00497"/>
</dbReference>
<dbReference type="Proteomes" id="UP000000417">
    <property type="component" value="Chromosome"/>
</dbReference>
<dbReference type="GO" id="GO:0005829">
    <property type="term" value="C:cytosol"/>
    <property type="evidence" value="ECO:0007669"/>
    <property type="project" value="TreeGrafter"/>
</dbReference>
<dbReference type="GO" id="GO:0008784">
    <property type="term" value="F:alanine racemase activity"/>
    <property type="evidence" value="ECO:0007669"/>
    <property type="project" value="UniProtKB-UniRule"/>
</dbReference>
<dbReference type="GO" id="GO:0030170">
    <property type="term" value="F:pyridoxal phosphate binding"/>
    <property type="evidence" value="ECO:0007669"/>
    <property type="project" value="UniProtKB-UniRule"/>
</dbReference>
<dbReference type="GO" id="GO:0030632">
    <property type="term" value="P:D-alanine biosynthetic process"/>
    <property type="evidence" value="ECO:0007669"/>
    <property type="project" value="UniProtKB-UniRule"/>
</dbReference>
<dbReference type="GO" id="GO:0009252">
    <property type="term" value="P:peptidoglycan biosynthetic process"/>
    <property type="evidence" value="ECO:0007669"/>
    <property type="project" value="TreeGrafter"/>
</dbReference>
<dbReference type="CDD" id="cd00430">
    <property type="entry name" value="PLPDE_III_AR"/>
    <property type="match status" value="1"/>
</dbReference>
<dbReference type="FunFam" id="2.40.37.10:FF:000006">
    <property type="entry name" value="Alanine racemase"/>
    <property type="match status" value="1"/>
</dbReference>
<dbReference type="FunFam" id="3.20.20.10:FF:000002">
    <property type="entry name" value="Alanine racemase"/>
    <property type="match status" value="1"/>
</dbReference>
<dbReference type="Gene3D" id="3.20.20.10">
    <property type="entry name" value="Alanine racemase"/>
    <property type="match status" value="1"/>
</dbReference>
<dbReference type="Gene3D" id="2.40.37.10">
    <property type="entry name" value="Lyase, Ornithine Decarboxylase, Chain A, domain 1"/>
    <property type="match status" value="1"/>
</dbReference>
<dbReference type="HAMAP" id="MF_01201">
    <property type="entry name" value="Ala_racemase"/>
    <property type="match status" value="1"/>
</dbReference>
<dbReference type="InterPro" id="IPR000821">
    <property type="entry name" value="Ala_racemase"/>
</dbReference>
<dbReference type="InterPro" id="IPR009006">
    <property type="entry name" value="Ala_racemase/Decarboxylase_C"/>
</dbReference>
<dbReference type="InterPro" id="IPR011079">
    <property type="entry name" value="Ala_racemase_C"/>
</dbReference>
<dbReference type="InterPro" id="IPR001608">
    <property type="entry name" value="Ala_racemase_N"/>
</dbReference>
<dbReference type="InterPro" id="IPR020622">
    <property type="entry name" value="Ala_racemase_pyridoxalP-BS"/>
</dbReference>
<dbReference type="InterPro" id="IPR029066">
    <property type="entry name" value="PLP-binding_barrel"/>
</dbReference>
<dbReference type="NCBIfam" id="TIGR00492">
    <property type="entry name" value="alr"/>
    <property type="match status" value="1"/>
</dbReference>
<dbReference type="PANTHER" id="PTHR30511">
    <property type="entry name" value="ALANINE RACEMASE"/>
    <property type="match status" value="1"/>
</dbReference>
<dbReference type="PANTHER" id="PTHR30511:SF0">
    <property type="entry name" value="ALANINE RACEMASE, CATABOLIC-RELATED"/>
    <property type="match status" value="1"/>
</dbReference>
<dbReference type="Pfam" id="PF00842">
    <property type="entry name" value="Ala_racemase_C"/>
    <property type="match status" value="1"/>
</dbReference>
<dbReference type="Pfam" id="PF01168">
    <property type="entry name" value="Ala_racemase_N"/>
    <property type="match status" value="1"/>
</dbReference>
<dbReference type="PRINTS" id="PR00992">
    <property type="entry name" value="ALARACEMASE"/>
</dbReference>
<dbReference type="SMART" id="SM01005">
    <property type="entry name" value="Ala_racemase_C"/>
    <property type="match status" value="1"/>
</dbReference>
<dbReference type="SUPFAM" id="SSF50621">
    <property type="entry name" value="Alanine racemase C-terminal domain-like"/>
    <property type="match status" value="1"/>
</dbReference>
<dbReference type="SUPFAM" id="SSF51419">
    <property type="entry name" value="PLP-binding barrel"/>
    <property type="match status" value="1"/>
</dbReference>
<dbReference type="PROSITE" id="PS00395">
    <property type="entry name" value="ALANINE_RACEMASE"/>
    <property type="match status" value="1"/>
</dbReference>
<organism>
    <name type="scientific">Symbiobacterium thermophilum (strain DSM 24528 / JCM 14929 / IAM 14863 / T)</name>
    <dbReference type="NCBI Taxonomy" id="292459"/>
    <lineage>
        <taxon>Bacteria</taxon>
        <taxon>Bacillati</taxon>
        <taxon>Bacillota</taxon>
        <taxon>Clostridia</taxon>
        <taxon>Eubacteriales</taxon>
        <taxon>Symbiobacteriaceae</taxon>
        <taxon>Symbiobacterium</taxon>
    </lineage>
</organism>
<name>ALR_SYMTH</name>
<evidence type="ECO:0000255" key="1">
    <source>
        <dbReference type="HAMAP-Rule" id="MF_01201"/>
    </source>
</evidence>